<comment type="function">
    <text evidence="1">NDH-1 shuttles electrons from NADH, via FMN and iron-sulfur (Fe-S) centers, to quinones in the respiratory chain. The immediate electron acceptor for the enzyme in this species is believed to be ubiquinone. Couples the redox reaction to proton translocation (for every two electrons transferred, four hydrogen ions are translocated across the cytoplasmic membrane), and thus conserves the redox energy in a proton gradient.</text>
</comment>
<comment type="catalytic activity">
    <reaction evidence="1">
        <text>a quinone + NADH + 5 H(+)(in) = a quinol + NAD(+) + 4 H(+)(out)</text>
        <dbReference type="Rhea" id="RHEA:57888"/>
        <dbReference type="ChEBI" id="CHEBI:15378"/>
        <dbReference type="ChEBI" id="CHEBI:24646"/>
        <dbReference type="ChEBI" id="CHEBI:57540"/>
        <dbReference type="ChEBI" id="CHEBI:57945"/>
        <dbReference type="ChEBI" id="CHEBI:132124"/>
    </reaction>
</comment>
<comment type="subunit">
    <text evidence="1">NDH-1 is composed of 14 different subunits. Subunits NuoB, C, D, E, F, and G constitute the peripheral sector of the complex.</text>
</comment>
<comment type="subcellular location">
    <subcellularLocation>
        <location evidence="1">Cell inner membrane</location>
        <topology evidence="1">Peripheral membrane protein</topology>
        <orientation evidence="1">Cytoplasmic side</orientation>
    </subcellularLocation>
</comment>
<comment type="similarity">
    <text evidence="1">Belongs to the complex I 30 kDa subunit family.</text>
</comment>
<comment type="sequence caution" evidence="2">
    <conflict type="erroneous initiation">
        <sequence resource="EMBL-CDS" id="ACB91693"/>
    </conflict>
</comment>
<proteinExistence type="inferred from homology"/>
<dbReference type="EC" id="7.1.1.-" evidence="1"/>
<dbReference type="EMBL" id="CP001011">
    <property type="protein sequence ID" value="ACB91693.1"/>
    <property type="status" value="ALT_INIT"/>
    <property type="molecule type" value="Genomic_DNA"/>
</dbReference>
<dbReference type="RefSeq" id="WP_004087936.1">
    <property type="nucleotide sequence ID" value="NC_010577.1"/>
</dbReference>
<dbReference type="SMR" id="B2I786"/>
<dbReference type="KEGG" id="xfn:XfasM23_0242"/>
<dbReference type="HOGENOM" id="CLU_042628_2_1_6"/>
<dbReference type="Proteomes" id="UP000001698">
    <property type="component" value="Chromosome"/>
</dbReference>
<dbReference type="GO" id="GO:0005886">
    <property type="term" value="C:plasma membrane"/>
    <property type="evidence" value="ECO:0007669"/>
    <property type="project" value="UniProtKB-SubCell"/>
</dbReference>
<dbReference type="GO" id="GO:0008137">
    <property type="term" value="F:NADH dehydrogenase (ubiquinone) activity"/>
    <property type="evidence" value="ECO:0007669"/>
    <property type="project" value="InterPro"/>
</dbReference>
<dbReference type="GO" id="GO:0050136">
    <property type="term" value="F:NADH:ubiquinone reductase (non-electrogenic) activity"/>
    <property type="evidence" value="ECO:0007669"/>
    <property type="project" value="UniProtKB-UniRule"/>
</dbReference>
<dbReference type="GO" id="GO:0048038">
    <property type="term" value="F:quinone binding"/>
    <property type="evidence" value="ECO:0007669"/>
    <property type="project" value="UniProtKB-KW"/>
</dbReference>
<dbReference type="Gene3D" id="3.30.460.80">
    <property type="entry name" value="NADH:ubiquinone oxidoreductase, 30kDa subunit"/>
    <property type="match status" value="1"/>
</dbReference>
<dbReference type="HAMAP" id="MF_01357">
    <property type="entry name" value="NDH1_NuoC"/>
    <property type="match status" value="1"/>
</dbReference>
<dbReference type="InterPro" id="IPR010218">
    <property type="entry name" value="NADH_DH_suC"/>
</dbReference>
<dbReference type="InterPro" id="IPR037232">
    <property type="entry name" value="NADH_quin_OxRdtase_su_C/D-like"/>
</dbReference>
<dbReference type="InterPro" id="IPR001268">
    <property type="entry name" value="NADH_UbQ_OxRdtase_30kDa_su"/>
</dbReference>
<dbReference type="InterPro" id="IPR020396">
    <property type="entry name" value="NADH_UbQ_OxRdtase_CS"/>
</dbReference>
<dbReference type="NCBIfam" id="NF004730">
    <property type="entry name" value="PRK06074.1-1"/>
    <property type="match status" value="1"/>
</dbReference>
<dbReference type="NCBIfam" id="NF004732">
    <property type="entry name" value="PRK06074.1-4"/>
    <property type="match status" value="1"/>
</dbReference>
<dbReference type="PANTHER" id="PTHR10884:SF14">
    <property type="entry name" value="NADH DEHYDROGENASE [UBIQUINONE] IRON-SULFUR PROTEIN 3, MITOCHONDRIAL"/>
    <property type="match status" value="1"/>
</dbReference>
<dbReference type="PANTHER" id="PTHR10884">
    <property type="entry name" value="NADH DEHYDROGENASE UBIQUINONE IRON-SULFUR PROTEIN 3"/>
    <property type="match status" value="1"/>
</dbReference>
<dbReference type="Pfam" id="PF00329">
    <property type="entry name" value="Complex1_30kDa"/>
    <property type="match status" value="1"/>
</dbReference>
<dbReference type="SUPFAM" id="SSF143243">
    <property type="entry name" value="Nqo5-like"/>
    <property type="match status" value="1"/>
</dbReference>
<dbReference type="PROSITE" id="PS00542">
    <property type="entry name" value="COMPLEX1_30K"/>
    <property type="match status" value="1"/>
</dbReference>
<organism>
    <name type="scientific">Xylella fastidiosa (strain M23)</name>
    <dbReference type="NCBI Taxonomy" id="405441"/>
    <lineage>
        <taxon>Bacteria</taxon>
        <taxon>Pseudomonadati</taxon>
        <taxon>Pseudomonadota</taxon>
        <taxon>Gammaproteobacteria</taxon>
        <taxon>Lysobacterales</taxon>
        <taxon>Lysobacteraceae</taxon>
        <taxon>Xylella</taxon>
    </lineage>
</organism>
<sequence length="250" mass="28094">MAEQTLSFVDCLMSRFPTVRVSVAQPRGEISLDVPVVEWCAVCKALRDEFDFEQLSDLCGVDYLGYGNAEWDTTDVSAQGFSRGVAGKAVGRFAWGEFPSAGSNDGTQPWDVPQERFAVLAHLISYRHNRRLRVRCFASNDALPIVASLTDVWPGVNWFEREAFDLFGIVFEGHPDLRRILTDYGFIGHPFRKDFPLTGNVEVRYDEEKKRVVYVPVTSVEPRVSVPRVIRDDPRFGAAAGESTHSETVK</sequence>
<feature type="chain" id="PRO_0000358233" description="NADH-quinone oxidoreductase subunit C">
    <location>
        <begin position="1"/>
        <end position="250"/>
    </location>
</feature>
<accession>B2I786</accession>
<keyword id="KW-0997">Cell inner membrane</keyword>
<keyword id="KW-1003">Cell membrane</keyword>
<keyword id="KW-0472">Membrane</keyword>
<keyword id="KW-0520">NAD</keyword>
<keyword id="KW-0874">Quinone</keyword>
<keyword id="KW-1278">Translocase</keyword>
<keyword id="KW-0813">Transport</keyword>
<keyword id="KW-0830">Ubiquinone</keyword>
<protein>
    <recommendedName>
        <fullName evidence="1">NADH-quinone oxidoreductase subunit C</fullName>
        <ecNumber evidence="1">7.1.1.-</ecNumber>
    </recommendedName>
    <alternativeName>
        <fullName evidence="1">NADH dehydrogenase I subunit C</fullName>
    </alternativeName>
    <alternativeName>
        <fullName evidence="1">NDH-1 subunit C</fullName>
    </alternativeName>
</protein>
<evidence type="ECO:0000255" key="1">
    <source>
        <dbReference type="HAMAP-Rule" id="MF_01357"/>
    </source>
</evidence>
<evidence type="ECO:0000305" key="2"/>
<reference key="1">
    <citation type="journal article" date="2010" name="J. Bacteriol.">
        <title>Whole genome sequences of two Xylella fastidiosa strains (M12 and M23) causing almond leaf scorch disease in California.</title>
        <authorList>
            <person name="Chen J."/>
            <person name="Xie G."/>
            <person name="Han S."/>
            <person name="Chertkov O."/>
            <person name="Sims D."/>
            <person name="Civerolo E.L."/>
        </authorList>
    </citation>
    <scope>NUCLEOTIDE SEQUENCE [LARGE SCALE GENOMIC DNA]</scope>
    <source>
        <strain>M23</strain>
    </source>
</reference>
<gene>
    <name evidence="1" type="primary">nuoC</name>
    <name type="ordered locus">XfasM23_0242</name>
</gene>
<name>NUOC_XYLF2</name>